<evidence type="ECO:0000255" key="1">
    <source>
        <dbReference type="HAMAP-Rule" id="MF_00434"/>
    </source>
</evidence>
<feature type="chain" id="PRO_1000050439" description="Putative pterin-4-alpha-carbinolamine dehydratase">
    <location>
        <begin position="1"/>
        <end position="118"/>
    </location>
</feature>
<gene>
    <name type="ordered locus">PST_3563</name>
</gene>
<reference key="1">
    <citation type="journal article" date="2008" name="Proc. Natl. Acad. Sci. U.S.A.">
        <title>Nitrogen fixation island and rhizosphere competence traits in the genome of root-associated Pseudomonas stutzeri A1501.</title>
        <authorList>
            <person name="Yan Y."/>
            <person name="Yang J."/>
            <person name="Dou Y."/>
            <person name="Chen M."/>
            <person name="Ping S."/>
            <person name="Peng J."/>
            <person name="Lu W."/>
            <person name="Zhang W."/>
            <person name="Yao Z."/>
            <person name="Li H."/>
            <person name="Liu W."/>
            <person name="He S."/>
            <person name="Geng L."/>
            <person name="Zhang X."/>
            <person name="Yang F."/>
            <person name="Yu H."/>
            <person name="Zhan Y."/>
            <person name="Li D."/>
            <person name="Lin Z."/>
            <person name="Wang Y."/>
            <person name="Elmerich C."/>
            <person name="Lin M."/>
            <person name="Jin Q."/>
        </authorList>
    </citation>
    <scope>NUCLEOTIDE SEQUENCE [LARGE SCALE GENOMIC DNA]</scope>
    <source>
        <strain>A1501</strain>
    </source>
</reference>
<sequence length="118" mass="13381">MTALAQAQCEACRADAPKVSDEELAELIREIPDWNIEVRGDHMELERVFLFRNFRHALAFTNAVGAIAEEVGHHPALLTEWGKVTVTWWSHEMRGLHRNDFIMAARTDQLAASAEGRK</sequence>
<protein>
    <recommendedName>
        <fullName evidence="1">Putative pterin-4-alpha-carbinolamine dehydratase</fullName>
        <shortName evidence="1">PHS</shortName>
        <ecNumber evidence="1">4.2.1.96</ecNumber>
    </recommendedName>
    <alternativeName>
        <fullName evidence="1">4-alpha-hydroxy-tetrahydropterin dehydratase</fullName>
    </alternativeName>
    <alternativeName>
        <fullName evidence="1">Pterin carbinolamine dehydratase</fullName>
        <shortName evidence="1">PCD</shortName>
    </alternativeName>
</protein>
<keyword id="KW-0456">Lyase</keyword>
<keyword id="KW-1185">Reference proteome</keyword>
<proteinExistence type="inferred from homology"/>
<comment type="catalytic activity">
    <reaction evidence="1">
        <text>(4aS,6R)-4a-hydroxy-L-erythro-5,6,7,8-tetrahydrobiopterin = (6R)-L-erythro-6,7-dihydrobiopterin + H2O</text>
        <dbReference type="Rhea" id="RHEA:11920"/>
        <dbReference type="ChEBI" id="CHEBI:15377"/>
        <dbReference type="ChEBI" id="CHEBI:15642"/>
        <dbReference type="ChEBI" id="CHEBI:43120"/>
        <dbReference type="EC" id="4.2.1.96"/>
    </reaction>
</comment>
<comment type="similarity">
    <text evidence="1">Belongs to the pterin-4-alpha-carbinolamine dehydratase family.</text>
</comment>
<name>PHS_STUS1</name>
<dbReference type="EC" id="4.2.1.96" evidence="1"/>
<dbReference type="EMBL" id="CP000304">
    <property type="protein sequence ID" value="ABP81191.1"/>
    <property type="molecule type" value="Genomic_DNA"/>
</dbReference>
<dbReference type="RefSeq" id="WP_011914586.1">
    <property type="nucleotide sequence ID" value="NC_009434.1"/>
</dbReference>
<dbReference type="SMR" id="A4VQE0"/>
<dbReference type="KEGG" id="psa:PST_3563"/>
<dbReference type="eggNOG" id="COG2154">
    <property type="taxonomic scope" value="Bacteria"/>
</dbReference>
<dbReference type="HOGENOM" id="CLU_081974_2_2_6"/>
<dbReference type="Proteomes" id="UP000000233">
    <property type="component" value="Chromosome"/>
</dbReference>
<dbReference type="GO" id="GO:0008124">
    <property type="term" value="F:4-alpha-hydroxytetrahydrobiopterin dehydratase activity"/>
    <property type="evidence" value="ECO:0007669"/>
    <property type="project" value="UniProtKB-UniRule"/>
</dbReference>
<dbReference type="GO" id="GO:0006729">
    <property type="term" value="P:tetrahydrobiopterin biosynthetic process"/>
    <property type="evidence" value="ECO:0007669"/>
    <property type="project" value="InterPro"/>
</dbReference>
<dbReference type="CDD" id="cd00913">
    <property type="entry name" value="PCD_DCoH_subfamily_a"/>
    <property type="match status" value="1"/>
</dbReference>
<dbReference type="Gene3D" id="3.30.1360.20">
    <property type="entry name" value="Transcriptional coactivator/pterin dehydratase"/>
    <property type="match status" value="1"/>
</dbReference>
<dbReference type="HAMAP" id="MF_00434">
    <property type="entry name" value="Pterin_4_alpha"/>
    <property type="match status" value="1"/>
</dbReference>
<dbReference type="InterPro" id="IPR036428">
    <property type="entry name" value="PCD_sf"/>
</dbReference>
<dbReference type="InterPro" id="IPR050376">
    <property type="entry name" value="Pterin-4-alpha-carb_dehyd"/>
</dbReference>
<dbReference type="InterPro" id="IPR001533">
    <property type="entry name" value="Pterin_deHydtase"/>
</dbReference>
<dbReference type="NCBIfam" id="NF002016">
    <property type="entry name" value="PRK00823.1-1"/>
    <property type="match status" value="1"/>
</dbReference>
<dbReference type="PANTHER" id="PTHR42805">
    <property type="entry name" value="PTERIN-4-ALPHA-CARBINOLAMINE DEHYDRATASE-RELATED"/>
    <property type="match status" value="1"/>
</dbReference>
<dbReference type="PANTHER" id="PTHR42805:SF1">
    <property type="entry name" value="PTERIN-4-ALPHA-CARBINOLAMINE DEHYDRATASE-RELATED"/>
    <property type="match status" value="1"/>
</dbReference>
<dbReference type="Pfam" id="PF01329">
    <property type="entry name" value="Pterin_4a"/>
    <property type="match status" value="1"/>
</dbReference>
<dbReference type="SUPFAM" id="SSF55248">
    <property type="entry name" value="PCD-like"/>
    <property type="match status" value="1"/>
</dbReference>
<organism>
    <name type="scientific">Stutzerimonas stutzeri (strain A1501)</name>
    <name type="common">Pseudomonas stutzeri</name>
    <dbReference type="NCBI Taxonomy" id="379731"/>
    <lineage>
        <taxon>Bacteria</taxon>
        <taxon>Pseudomonadati</taxon>
        <taxon>Pseudomonadota</taxon>
        <taxon>Gammaproteobacteria</taxon>
        <taxon>Pseudomonadales</taxon>
        <taxon>Pseudomonadaceae</taxon>
        <taxon>Stutzerimonas</taxon>
    </lineage>
</organism>
<accession>A4VQE0</accession>